<evidence type="ECO:0000255" key="1">
    <source>
        <dbReference type="HAMAP-Rule" id="MF_00420"/>
    </source>
</evidence>
<dbReference type="EC" id="6.3.5.3" evidence="1"/>
<dbReference type="EMBL" id="CP000463">
    <property type="protein sequence ID" value="ABJ05562.1"/>
    <property type="molecule type" value="Genomic_DNA"/>
</dbReference>
<dbReference type="SMR" id="Q07R72"/>
<dbReference type="STRING" id="316055.RPE_1613"/>
<dbReference type="KEGG" id="rpe:RPE_1613"/>
<dbReference type="eggNOG" id="COG0046">
    <property type="taxonomic scope" value="Bacteria"/>
</dbReference>
<dbReference type="HOGENOM" id="CLU_003100_0_1_5"/>
<dbReference type="UniPathway" id="UPA00074">
    <property type="reaction ID" value="UER00128"/>
</dbReference>
<dbReference type="GO" id="GO:0005737">
    <property type="term" value="C:cytoplasm"/>
    <property type="evidence" value="ECO:0007669"/>
    <property type="project" value="UniProtKB-SubCell"/>
</dbReference>
<dbReference type="GO" id="GO:0005524">
    <property type="term" value="F:ATP binding"/>
    <property type="evidence" value="ECO:0007669"/>
    <property type="project" value="UniProtKB-UniRule"/>
</dbReference>
<dbReference type="GO" id="GO:0000287">
    <property type="term" value="F:magnesium ion binding"/>
    <property type="evidence" value="ECO:0007669"/>
    <property type="project" value="UniProtKB-UniRule"/>
</dbReference>
<dbReference type="GO" id="GO:0004642">
    <property type="term" value="F:phosphoribosylformylglycinamidine synthase activity"/>
    <property type="evidence" value="ECO:0007669"/>
    <property type="project" value="UniProtKB-UniRule"/>
</dbReference>
<dbReference type="GO" id="GO:0006189">
    <property type="term" value="P:'de novo' IMP biosynthetic process"/>
    <property type="evidence" value="ECO:0007669"/>
    <property type="project" value="UniProtKB-UniRule"/>
</dbReference>
<dbReference type="CDD" id="cd02203">
    <property type="entry name" value="PurL_repeat1"/>
    <property type="match status" value="1"/>
</dbReference>
<dbReference type="CDD" id="cd02204">
    <property type="entry name" value="PurL_repeat2"/>
    <property type="match status" value="1"/>
</dbReference>
<dbReference type="FunFam" id="3.30.1330.10:FF:000004">
    <property type="entry name" value="Phosphoribosylformylglycinamidine synthase subunit PurL"/>
    <property type="match status" value="1"/>
</dbReference>
<dbReference type="Gene3D" id="3.90.650.10">
    <property type="entry name" value="PurM-like C-terminal domain"/>
    <property type="match status" value="2"/>
</dbReference>
<dbReference type="Gene3D" id="3.30.1330.10">
    <property type="entry name" value="PurM-like, N-terminal domain"/>
    <property type="match status" value="2"/>
</dbReference>
<dbReference type="HAMAP" id="MF_00420">
    <property type="entry name" value="PurL_2"/>
    <property type="match status" value="1"/>
</dbReference>
<dbReference type="InterPro" id="IPR010074">
    <property type="entry name" value="PRibForGlyAmidine_synth_PurL"/>
</dbReference>
<dbReference type="InterPro" id="IPR041609">
    <property type="entry name" value="PurL_linker"/>
</dbReference>
<dbReference type="InterPro" id="IPR010918">
    <property type="entry name" value="PurM-like_C_dom"/>
</dbReference>
<dbReference type="InterPro" id="IPR036676">
    <property type="entry name" value="PurM-like_C_sf"/>
</dbReference>
<dbReference type="InterPro" id="IPR016188">
    <property type="entry name" value="PurM-like_N"/>
</dbReference>
<dbReference type="InterPro" id="IPR036921">
    <property type="entry name" value="PurM-like_N_sf"/>
</dbReference>
<dbReference type="NCBIfam" id="TIGR01736">
    <property type="entry name" value="FGAM_synth_II"/>
    <property type="match status" value="1"/>
</dbReference>
<dbReference type="NCBIfam" id="NF002290">
    <property type="entry name" value="PRK01213.1"/>
    <property type="match status" value="1"/>
</dbReference>
<dbReference type="PANTHER" id="PTHR43555">
    <property type="entry name" value="PHOSPHORIBOSYLFORMYLGLYCINAMIDINE SYNTHASE SUBUNIT PURL"/>
    <property type="match status" value="1"/>
</dbReference>
<dbReference type="PANTHER" id="PTHR43555:SF1">
    <property type="entry name" value="PHOSPHORIBOSYLFORMYLGLYCINAMIDINE SYNTHASE SUBUNIT PURL"/>
    <property type="match status" value="1"/>
</dbReference>
<dbReference type="Pfam" id="PF00586">
    <property type="entry name" value="AIRS"/>
    <property type="match status" value="2"/>
</dbReference>
<dbReference type="Pfam" id="PF02769">
    <property type="entry name" value="AIRS_C"/>
    <property type="match status" value="2"/>
</dbReference>
<dbReference type="Pfam" id="PF18072">
    <property type="entry name" value="FGAR-AT_linker"/>
    <property type="match status" value="1"/>
</dbReference>
<dbReference type="PIRSF" id="PIRSF001587">
    <property type="entry name" value="FGAM_synthase_II"/>
    <property type="match status" value="1"/>
</dbReference>
<dbReference type="SUPFAM" id="SSF56042">
    <property type="entry name" value="PurM C-terminal domain-like"/>
    <property type="match status" value="2"/>
</dbReference>
<dbReference type="SUPFAM" id="SSF55326">
    <property type="entry name" value="PurM N-terminal domain-like"/>
    <property type="match status" value="2"/>
</dbReference>
<reference key="1">
    <citation type="submission" date="2006-09" db="EMBL/GenBank/DDBJ databases">
        <title>Complete sequence of Rhodopseudomonas palustris BisA53.</title>
        <authorList>
            <consortium name="US DOE Joint Genome Institute"/>
            <person name="Copeland A."/>
            <person name="Lucas S."/>
            <person name="Lapidus A."/>
            <person name="Barry K."/>
            <person name="Detter J.C."/>
            <person name="Glavina del Rio T."/>
            <person name="Hammon N."/>
            <person name="Israni S."/>
            <person name="Dalin E."/>
            <person name="Tice H."/>
            <person name="Pitluck S."/>
            <person name="Chain P."/>
            <person name="Malfatti S."/>
            <person name="Shin M."/>
            <person name="Vergez L."/>
            <person name="Schmutz J."/>
            <person name="Larimer F."/>
            <person name="Land M."/>
            <person name="Hauser L."/>
            <person name="Pelletier D.A."/>
            <person name="Kyrpides N."/>
            <person name="Kim E."/>
            <person name="Harwood C.S."/>
            <person name="Oda Y."/>
            <person name="Richardson P."/>
        </authorList>
    </citation>
    <scope>NUCLEOTIDE SEQUENCE [LARGE SCALE GENOMIC DNA]</scope>
    <source>
        <strain>BisA53</strain>
    </source>
</reference>
<organism>
    <name type="scientific">Rhodopseudomonas palustris (strain BisA53)</name>
    <dbReference type="NCBI Taxonomy" id="316055"/>
    <lineage>
        <taxon>Bacteria</taxon>
        <taxon>Pseudomonadati</taxon>
        <taxon>Pseudomonadota</taxon>
        <taxon>Alphaproteobacteria</taxon>
        <taxon>Hyphomicrobiales</taxon>
        <taxon>Nitrobacteraceae</taxon>
        <taxon>Rhodopseudomonas</taxon>
    </lineage>
</organism>
<accession>Q07R72</accession>
<sequence>MTISNTAKITPELVASHGLKPDEYERILKLIGREPSLTELGIFSAMWNEHCSYKSSRIHLKGLPTKAPWVLQGPGENAGVIDIGDNQAVVFKMESHNHPSFIEPYQGATTGVGGILRDVFTMGARPIACLNALSFGAPEHPKTRRLVSGVVAGVGGYGNSFGVPTVGGQVRFHTRYDGNILVNAMAVGLADADKIFLAAASGVGMPIVYLGSKTGRDGMGGATMASAEFDADSEEKRPTVQVGDPFAEKLLLEACLEIMANDCVIAIQDMGAAGLTCSAVEMGAKGDLGVDLDLDKVPTRETGMTAYEMMLSESQERMLMVLKPEKEALAEQIFKKWGLDFAIVGYTTPTKRFVVKHGGEVKADLPIKELGDEAPLYDRPHVPSPKLPVIHAREINAPLSVPDALEKLIGTPELCSRRWVWEQYDHVILGNTVQRPGGDAAVVRIEDGPKGLALTVDVTPRYCEADPVEGGKQAVAEAYRNVTAVGGKLLAITDNLNFGNPERPEIMGQLVGCLKGISEACIALDSPIVSGNVSLYNETNGRGILPTPSIGGVGLLDDFTKSATLAFKAADEAILLIGDTHGWLGQSVYLRDVCGREEGAPPPVDLAAEKRNGDVVRGMIHAGTATAVHDISDGGLLIALAEMAIAGGIGATLDPAPDSTVPHAWWFGEDQARYVVTVKQDDLLGVMTKLKTVGVPCTQIGITGGATLSIAGERAIEVTALETAHEAWLPAYMAAKN</sequence>
<keyword id="KW-0067">ATP-binding</keyword>
<keyword id="KW-0963">Cytoplasm</keyword>
<keyword id="KW-0436">Ligase</keyword>
<keyword id="KW-0460">Magnesium</keyword>
<keyword id="KW-0479">Metal-binding</keyword>
<keyword id="KW-0547">Nucleotide-binding</keyword>
<keyword id="KW-0658">Purine biosynthesis</keyword>
<comment type="function">
    <text evidence="1">Part of the phosphoribosylformylglycinamidine synthase complex involved in the purines biosynthetic pathway. Catalyzes the ATP-dependent conversion of formylglycinamide ribonucleotide (FGAR) and glutamine to yield formylglycinamidine ribonucleotide (FGAM) and glutamate. The FGAM synthase complex is composed of three subunits. PurQ produces an ammonia molecule by converting glutamine to glutamate. PurL transfers the ammonia molecule to FGAR to form FGAM in an ATP-dependent manner. PurS interacts with PurQ and PurL and is thought to assist in the transfer of the ammonia molecule from PurQ to PurL.</text>
</comment>
<comment type="catalytic activity">
    <reaction evidence="1">
        <text>N(2)-formyl-N(1)-(5-phospho-beta-D-ribosyl)glycinamide + L-glutamine + ATP + H2O = 2-formamido-N(1)-(5-O-phospho-beta-D-ribosyl)acetamidine + L-glutamate + ADP + phosphate + H(+)</text>
        <dbReference type="Rhea" id="RHEA:17129"/>
        <dbReference type="ChEBI" id="CHEBI:15377"/>
        <dbReference type="ChEBI" id="CHEBI:15378"/>
        <dbReference type="ChEBI" id="CHEBI:29985"/>
        <dbReference type="ChEBI" id="CHEBI:30616"/>
        <dbReference type="ChEBI" id="CHEBI:43474"/>
        <dbReference type="ChEBI" id="CHEBI:58359"/>
        <dbReference type="ChEBI" id="CHEBI:147286"/>
        <dbReference type="ChEBI" id="CHEBI:147287"/>
        <dbReference type="ChEBI" id="CHEBI:456216"/>
        <dbReference type="EC" id="6.3.5.3"/>
    </reaction>
</comment>
<comment type="pathway">
    <text evidence="1">Purine metabolism; IMP biosynthesis via de novo pathway; 5-amino-1-(5-phospho-D-ribosyl)imidazole from N(2)-formyl-N(1)-(5-phospho-D-ribosyl)glycinamide: step 1/2.</text>
</comment>
<comment type="subunit">
    <text evidence="1">Monomer. Part of the FGAM synthase complex composed of 1 PurL, 1 PurQ and 2 PurS subunits.</text>
</comment>
<comment type="subcellular location">
    <subcellularLocation>
        <location evidence="1">Cytoplasm</location>
    </subcellularLocation>
</comment>
<comment type="similarity">
    <text evidence="1">Belongs to the FGAMS family.</text>
</comment>
<proteinExistence type="inferred from homology"/>
<protein>
    <recommendedName>
        <fullName evidence="1">Phosphoribosylformylglycinamidine synthase subunit PurL</fullName>
        <shortName evidence="1">FGAM synthase</shortName>
        <ecNumber evidence="1">6.3.5.3</ecNumber>
    </recommendedName>
    <alternativeName>
        <fullName evidence="1">Formylglycinamide ribonucleotide amidotransferase subunit II</fullName>
        <shortName evidence="1">FGAR amidotransferase II</shortName>
        <shortName evidence="1">FGAR-AT II</shortName>
    </alternativeName>
    <alternativeName>
        <fullName evidence="1">Glutamine amidotransferase PurL</fullName>
    </alternativeName>
    <alternativeName>
        <fullName evidence="1">Phosphoribosylformylglycinamidine synthase subunit II</fullName>
    </alternativeName>
</protein>
<name>PURL_RHOP5</name>
<gene>
    <name evidence="1" type="primary">purL</name>
    <name type="ordered locus">RPE_1613</name>
</gene>
<feature type="chain" id="PRO_1000194834" description="Phosphoribosylformylglycinamidine synthase subunit PurL">
    <location>
        <begin position="1"/>
        <end position="737"/>
    </location>
</feature>
<feature type="active site" evidence="1">
    <location>
        <position position="50"/>
    </location>
</feature>
<feature type="active site" description="Proton acceptor" evidence="1">
    <location>
        <position position="96"/>
    </location>
</feature>
<feature type="binding site" evidence="1">
    <location>
        <position position="53"/>
    </location>
    <ligand>
        <name>ATP</name>
        <dbReference type="ChEBI" id="CHEBI:30616"/>
    </ligand>
</feature>
<feature type="binding site" evidence="1">
    <location>
        <position position="92"/>
    </location>
    <ligand>
        <name>ATP</name>
        <dbReference type="ChEBI" id="CHEBI:30616"/>
    </ligand>
</feature>
<feature type="binding site" evidence="1">
    <location>
        <position position="94"/>
    </location>
    <ligand>
        <name>Mg(2+)</name>
        <dbReference type="ChEBI" id="CHEBI:18420"/>
        <label>1</label>
    </ligand>
</feature>
<feature type="binding site" evidence="1">
    <location>
        <begin position="95"/>
        <end position="98"/>
    </location>
    <ligand>
        <name>substrate</name>
    </ligand>
</feature>
<feature type="binding site" evidence="1">
    <location>
        <position position="117"/>
    </location>
    <ligand>
        <name>substrate</name>
    </ligand>
</feature>
<feature type="binding site" evidence="1">
    <location>
        <position position="118"/>
    </location>
    <ligand>
        <name>Mg(2+)</name>
        <dbReference type="ChEBI" id="CHEBI:18420"/>
        <label>2</label>
    </ligand>
</feature>
<feature type="binding site" evidence="1">
    <location>
        <position position="241"/>
    </location>
    <ligand>
        <name>substrate</name>
    </ligand>
</feature>
<feature type="binding site" evidence="1">
    <location>
        <position position="269"/>
    </location>
    <ligand>
        <name>Mg(2+)</name>
        <dbReference type="ChEBI" id="CHEBI:18420"/>
        <label>2</label>
    </ligand>
</feature>
<feature type="binding site" evidence="1">
    <location>
        <begin position="313"/>
        <end position="315"/>
    </location>
    <ligand>
        <name>substrate</name>
    </ligand>
</feature>
<feature type="binding site" evidence="1">
    <location>
        <position position="494"/>
    </location>
    <ligand>
        <name>ATP</name>
        <dbReference type="ChEBI" id="CHEBI:30616"/>
    </ligand>
</feature>
<feature type="binding site" evidence="1">
    <location>
        <position position="531"/>
    </location>
    <ligand>
        <name>ATP</name>
        <dbReference type="ChEBI" id="CHEBI:30616"/>
    </ligand>
</feature>
<feature type="binding site" evidence="1">
    <location>
        <position position="532"/>
    </location>
    <ligand>
        <name>Mg(2+)</name>
        <dbReference type="ChEBI" id="CHEBI:18420"/>
        <label>1</label>
    </ligand>
</feature>
<feature type="binding site" evidence="1">
    <location>
        <position position="534"/>
    </location>
    <ligand>
        <name>substrate</name>
    </ligand>
</feature>